<sequence length="206" mass="22710">MAVRSKSSKAWLHEHVNDHYVHMAQKDGYRARAAYKLLEINEKDKLIKPGTVLADLGSAPGSWSQVAAKLTGTSGAVFALDILPMEAIGGVSFIQGDFRENDVLAQFEGLLNNRPLDLVICDMAPNMSGNAVSDQARSFYLCELALDFASQHLKTGGSFLVKVFQGAGYQEYMAAMREFFGTVQTRKPEASRNRSSEIYLLGKNKR</sequence>
<evidence type="ECO:0000255" key="1">
    <source>
        <dbReference type="HAMAP-Rule" id="MF_01547"/>
    </source>
</evidence>
<feature type="chain" id="PRO_0000300596" description="Ribosomal RNA large subunit methyltransferase E">
    <location>
        <begin position="1"/>
        <end position="206"/>
    </location>
</feature>
<feature type="active site" description="Proton acceptor" evidence="1">
    <location>
        <position position="162"/>
    </location>
</feature>
<feature type="binding site" evidence="1">
    <location>
        <position position="61"/>
    </location>
    <ligand>
        <name>S-adenosyl-L-methionine</name>
        <dbReference type="ChEBI" id="CHEBI:59789"/>
    </ligand>
</feature>
<feature type="binding site" evidence="1">
    <location>
        <position position="63"/>
    </location>
    <ligand>
        <name>S-adenosyl-L-methionine</name>
        <dbReference type="ChEBI" id="CHEBI:59789"/>
    </ligand>
</feature>
<feature type="binding site" evidence="1">
    <location>
        <position position="81"/>
    </location>
    <ligand>
        <name>S-adenosyl-L-methionine</name>
        <dbReference type="ChEBI" id="CHEBI:59789"/>
    </ligand>
</feature>
<feature type="binding site" evidence="1">
    <location>
        <position position="97"/>
    </location>
    <ligand>
        <name>S-adenosyl-L-methionine</name>
        <dbReference type="ChEBI" id="CHEBI:59789"/>
    </ligand>
</feature>
<feature type="binding site" evidence="1">
    <location>
        <position position="122"/>
    </location>
    <ligand>
        <name>S-adenosyl-L-methionine</name>
        <dbReference type="ChEBI" id="CHEBI:59789"/>
    </ligand>
</feature>
<proteinExistence type="inferred from homology"/>
<keyword id="KW-0963">Cytoplasm</keyword>
<keyword id="KW-0489">Methyltransferase</keyword>
<keyword id="KW-0698">rRNA processing</keyword>
<keyword id="KW-0949">S-adenosyl-L-methionine</keyword>
<keyword id="KW-0808">Transferase</keyword>
<reference key="1">
    <citation type="journal article" date="2007" name="PLoS Genet.">
        <title>Meningococcal genetic variation mechanisms viewed through comparative analysis of serogroup C strain FAM18.</title>
        <authorList>
            <person name="Bentley S.D."/>
            <person name="Vernikos G.S."/>
            <person name="Snyder L.A.S."/>
            <person name="Churcher C."/>
            <person name="Arrowsmith C."/>
            <person name="Chillingworth T."/>
            <person name="Cronin A."/>
            <person name="Davis P.H."/>
            <person name="Holroyd N.E."/>
            <person name="Jagels K."/>
            <person name="Maddison M."/>
            <person name="Moule S."/>
            <person name="Rabbinowitsch E."/>
            <person name="Sharp S."/>
            <person name="Unwin L."/>
            <person name="Whitehead S."/>
            <person name="Quail M.A."/>
            <person name="Achtman M."/>
            <person name="Barrell B.G."/>
            <person name="Saunders N.J."/>
            <person name="Parkhill J."/>
        </authorList>
    </citation>
    <scope>NUCLEOTIDE SEQUENCE [LARGE SCALE GENOMIC DNA]</scope>
    <source>
        <strain>ATCC 700532 / DSM 15464 / FAM18</strain>
    </source>
</reference>
<name>RLME_NEIMF</name>
<comment type="function">
    <text evidence="1">Specifically methylates the uridine in position 2552 of 23S rRNA at the 2'-O position of the ribose in the fully assembled 50S ribosomal subunit.</text>
</comment>
<comment type="catalytic activity">
    <reaction evidence="1">
        <text>uridine(2552) in 23S rRNA + S-adenosyl-L-methionine = 2'-O-methyluridine(2552) in 23S rRNA + S-adenosyl-L-homocysteine + H(+)</text>
        <dbReference type="Rhea" id="RHEA:42720"/>
        <dbReference type="Rhea" id="RHEA-COMP:10202"/>
        <dbReference type="Rhea" id="RHEA-COMP:10203"/>
        <dbReference type="ChEBI" id="CHEBI:15378"/>
        <dbReference type="ChEBI" id="CHEBI:57856"/>
        <dbReference type="ChEBI" id="CHEBI:59789"/>
        <dbReference type="ChEBI" id="CHEBI:65315"/>
        <dbReference type="ChEBI" id="CHEBI:74478"/>
        <dbReference type="EC" id="2.1.1.166"/>
    </reaction>
</comment>
<comment type="subcellular location">
    <subcellularLocation>
        <location evidence="1">Cytoplasm</location>
    </subcellularLocation>
</comment>
<comment type="similarity">
    <text evidence="1">Belongs to the class I-like SAM-binding methyltransferase superfamily. RNA methyltransferase RlmE family.</text>
</comment>
<accession>A1KT57</accession>
<gene>
    <name evidence="1" type="primary">rlmE</name>
    <name evidence="1" type="synonym">ftsJ</name>
    <name evidence="1" type="synonym">rrmJ</name>
    <name type="ordered locus">NMC0751</name>
</gene>
<dbReference type="EC" id="2.1.1.166" evidence="1"/>
<dbReference type="EMBL" id="AM421808">
    <property type="protein sequence ID" value="CAM10039.1"/>
    <property type="molecule type" value="Genomic_DNA"/>
</dbReference>
<dbReference type="RefSeq" id="WP_002248009.1">
    <property type="nucleotide sequence ID" value="NC_008767.1"/>
</dbReference>
<dbReference type="SMR" id="A1KT57"/>
<dbReference type="KEGG" id="nmc:NMC0751"/>
<dbReference type="HOGENOM" id="CLU_009422_4_0_4"/>
<dbReference type="Proteomes" id="UP000002286">
    <property type="component" value="Chromosome"/>
</dbReference>
<dbReference type="GO" id="GO:0005737">
    <property type="term" value="C:cytoplasm"/>
    <property type="evidence" value="ECO:0007669"/>
    <property type="project" value="UniProtKB-SubCell"/>
</dbReference>
<dbReference type="GO" id="GO:0008650">
    <property type="term" value="F:rRNA (uridine-2'-O-)-methyltransferase activity"/>
    <property type="evidence" value="ECO:0007669"/>
    <property type="project" value="UniProtKB-UniRule"/>
</dbReference>
<dbReference type="FunFam" id="3.40.50.150:FF:000005">
    <property type="entry name" value="Ribosomal RNA large subunit methyltransferase E"/>
    <property type="match status" value="1"/>
</dbReference>
<dbReference type="Gene3D" id="3.40.50.150">
    <property type="entry name" value="Vaccinia Virus protein VP39"/>
    <property type="match status" value="1"/>
</dbReference>
<dbReference type="HAMAP" id="MF_01547">
    <property type="entry name" value="RNA_methyltr_E"/>
    <property type="match status" value="1"/>
</dbReference>
<dbReference type="InterPro" id="IPR050082">
    <property type="entry name" value="RNA_methyltr_RlmE"/>
</dbReference>
<dbReference type="InterPro" id="IPR002877">
    <property type="entry name" value="RNA_MeTrfase_FtsJ_dom"/>
</dbReference>
<dbReference type="InterPro" id="IPR015507">
    <property type="entry name" value="rRNA-MeTfrase_E"/>
</dbReference>
<dbReference type="InterPro" id="IPR029063">
    <property type="entry name" value="SAM-dependent_MTases_sf"/>
</dbReference>
<dbReference type="PANTHER" id="PTHR10920">
    <property type="entry name" value="RIBOSOMAL RNA METHYLTRANSFERASE"/>
    <property type="match status" value="1"/>
</dbReference>
<dbReference type="PANTHER" id="PTHR10920:SF18">
    <property type="entry name" value="RRNA METHYLTRANSFERASE 2, MITOCHONDRIAL"/>
    <property type="match status" value="1"/>
</dbReference>
<dbReference type="Pfam" id="PF01728">
    <property type="entry name" value="FtsJ"/>
    <property type="match status" value="1"/>
</dbReference>
<dbReference type="PIRSF" id="PIRSF005461">
    <property type="entry name" value="23S_rRNA_mtase"/>
    <property type="match status" value="1"/>
</dbReference>
<dbReference type="SUPFAM" id="SSF53335">
    <property type="entry name" value="S-adenosyl-L-methionine-dependent methyltransferases"/>
    <property type="match status" value="1"/>
</dbReference>
<organism>
    <name type="scientific">Neisseria meningitidis serogroup C / serotype 2a (strain ATCC 700532 / DSM 15464 / FAM18)</name>
    <dbReference type="NCBI Taxonomy" id="272831"/>
    <lineage>
        <taxon>Bacteria</taxon>
        <taxon>Pseudomonadati</taxon>
        <taxon>Pseudomonadota</taxon>
        <taxon>Betaproteobacteria</taxon>
        <taxon>Neisseriales</taxon>
        <taxon>Neisseriaceae</taxon>
        <taxon>Neisseria</taxon>
    </lineage>
</organism>
<protein>
    <recommendedName>
        <fullName evidence="1">Ribosomal RNA large subunit methyltransferase E</fullName>
        <ecNumber evidence="1">2.1.1.166</ecNumber>
    </recommendedName>
    <alternativeName>
        <fullName evidence="1">23S rRNA Um2552 methyltransferase</fullName>
    </alternativeName>
    <alternativeName>
        <fullName evidence="1">rRNA (uridine-2'-O-)-methyltransferase</fullName>
    </alternativeName>
</protein>